<name>Y3312_BRUA2</name>
<gene>
    <name type="ordered locus">BAB2_0812</name>
</gene>
<sequence length="527" mass="57376">MRLRNFYSALALSAAVFAGPLYAAAPAMAAGTISGGFDVGPGGFQGNFNPLAATGGFTWLVTYFEPLVIYDDKLENIVGDLAKSFEISPDQLTYTFKLAHAKWHDGEPFTSKDAKFTFDLARNGKTGSVFAARLASIASVETPDEKTVVIKLKEPSPSMLDTLTKVMMLPEHALASIPPEQLAKNAWWSSTPIGTGPFKFNKYVADQYVELTANPDYRGGRPQVDKLINRYFADPAAAIAALRSGEIQFTYVDSNDVSTFSSDSAFRVIEGDSFVVNYVGFNQEVPLWKDLKVRQAFMHAINRDAIIQSLYGGAAKPANCVYVADRLVPKAIDAYAYDPQKARQLLDEAGWDKINGSKPITILTYYNSPLVANVLAAMQAMLAQVGINIVPRTVDTPTYNSIVYKQGGTADEFPLIFAGLQNGPDPSSINIGLNEKQIPPAGSNIMRIRMPAVTKALDAALAETNPAKRDARYQDVCKATNANLPWGTMWVANRYGVASSKLENFIWTPAPAGGPYQAHPEKWAILE</sequence>
<feature type="signal peptide" evidence="2">
    <location>
        <begin position="1"/>
        <end position="23"/>
    </location>
</feature>
<feature type="chain" id="PRO_0000328704" description="Putative ABC transporter peptide-binding protein BAB2_0812">
    <location>
        <begin position="24"/>
        <end position="527"/>
    </location>
</feature>
<comment type="function">
    <text evidence="1">Probably part of an ABC transporter complex that could be involved in peptide import.</text>
</comment>
<comment type="subunit">
    <text evidence="3">The complex is composed of two ATP-binding proteins (BAB2_0817 and BAB2_0818), two transmembrane proteins (BAB2_0815) and a solute-binding protein (BAB2_0812).</text>
</comment>
<comment type="subcellular location">
    <subcellularLocation>
        <location evidence="3">Periplasm</location>
    </subcellularLocation>
</comment>
<comment type="similarity">
    <text evidence="3">Belongs to the bacterial solute-binding protein 5 family.</text>
</comment>
<organism>
    <name type="scientific">Brucella abortus (strain 2308)</name>
    <dbReference type="NCBI Taxonomy" id="359391"/>
    <lineage>
        <taxon>Bacteria</taxon>
        <taxon>Pseudomonadati</taxon>
        <taxon>Pseudomonadota</taxon>
        <taxon>Alphaproteobacteria</taxon>
        <taxon>Hyphomicrobiales</taxon>
        <taxon>Brucellaceae</taxon>
        <taxon>Brucella/Ochrobactrum group</taxon>
        <taxon>Brucella</taxon>
    </lineage>
</organism>
<proteinExistence type="inferred from homology"/>
<dbReference type="EMBL" id="AM040265">
    <property type="protein sequence ID" value="CAJ12978.1"/>
    <property type="molecule type" value="Genomic_DNA"/>
</dbReference>
<dbReference type="RefSeq" id="WP_002966198.1">
    <property type="nucleotide sequence ID" value="NZ_KN046823.1"/>
</dbReference>
<dbReference type="SMR" id="Q2YK66"/>
<dbReference type="STRING" id="359391.BAB2_0812"/>
<dbReference type="KEGG" id="bmf:BAB2_0812"/>
<dbReference type="PATRIC" id="fig|359391.11.peg.503"/>
<dbReference type="HOGENOM" id="CLU_017028_7_3_5"/>
<dbReference type="Proteomes" id="UP000002719">
    <property type="component" value="Chromosome II"/>
</dbReference>
<dbReference type="GO" id="GO:0043190">
    <property type="term" value="C:ATP-binding cassette (ABC) transporter complex"/>
    <property type="evidence" value="ECO:0007669"/>
    <property type="project" value="InterPro"/>
</dbReference>
<dbReference type="GO" id="GO:0030288">
    <property type="term" value="C:outer membrane-bounded periplasmic space"/>
    <property type="evidence" value="ECO:0007669"/>
    <property type="project" value="UniProtKB-ARBA"/>
</dbReference>
<dbReference type="GO" id="GO:1904680">
    <property type="term" value="F:peptide transmembrane transporter activity"/>
    <property type="evidence" value="ECO:0007669"/>
    <property type="project" value="TreeGrafter"/>
</dbReference>
<dbReference type="GO" id="GO:0015833">
    <property type="term" value="P:peptide transport"/>
    <property type="evidence" value="ECO:0007669"/>
    <property type="project" value="UniProtKB-KW"/>
</dbReference>
<dbReference type="GO" id="GO:0015031">
    <property type="term" value="P:protein transport"/>
    <property type="evidence" value="ECO:0007669"/>
    <property type="project" value="UniProtKB-KW"/>
</dbReference>
<dbReference type="CDD" id="cd00995">
    <property type="entry name" value="PBP2_NikA_DppA_OppA_like"/>
    <property type="match status" value="1"/>
</dbReference>
<dbReference type="Gene3D" id="3.90.76.10">
    <property type="entry name" value="Dipeptide-binding Protein, Domain 1"/>
    <property type="match status" value="1"/>
</dbReference>
<dbReference type="Gene3D" id="3.10.105.10">
    <property type="entry name" value="Dipeptide-binding Protein, Domain 3"/>
    <property type="match status" value="1"/>
</dbReference>
<dbReference type="Gene3D" id="3.40.190.10">
    <property type="entry name" value="Periplasmic binding protein-like II"/>
    <property type="match status" value="1"/>
</dbReference>
<dbReference type="InterPro" id="IPR030678">
    <property type="entry name" value="Peptide/Ni-bd"/>
</dbReference>
<dbReference type="InterPro" id="IPR039424">
    <property type="entry name" value="SBP_5"/>
</dbReference>
<dbReference type="InterPro" id="IPR000914">
    <property type="entry name" value="SBP_5_dom"/>
</dbReference>
<dbReference type="PANTHER" id="PTHR30290">
    <property type="entry name" value="PERIPLASMIC BINDING COMPONENT OF ABC TRANSPORTER"/>
    <property type="match status" value="1"/>
</dbReference>
<dbReference type="Pfam" id="PF00496">
    <property type="entry name" value="SBP_bac_5"/>
    <property type="match status" value="1"/>
</dbReference>
<dbReference type="PIRSF" id="PIRSF002741">
    <property type="entry name" value="MppA"/>
    <property type="match status" value="1"/>
</dbReference>
<dbReference type="SUPFAM" id="SSF53850">
    <property type="entry name" value="Periplasmic binding protein-like II"/>
    <property type="match status" value="1"/>
</dbReference>
<protein>
    <recommendedName>
        <fullName>Putative ABC transporter peptide-binding protein BAB2_0812</fullName>
    </recommendedName>
</protein>
<keyword id="KW-0571">Peptide transport</keyword>
<keyword id="KW-0574">Periplasm</keyword>
<keyword id="KW-0653">Protein transport</keyword>
<keyword id="KW-1185">Reference proteome</keyword>
<keyword id="KW-0732">Signal</keyword>
<keyword id="KW-0813">Transport</keyword>
<reference key="1">
    <citation type="journal article" date="2005" name="Infect. Immun.">
        <title>Whole-genome analyses of speciation events in pathogenic Brucellae.</title>
        <authorList>
            <person name="Chain P.S."/>
            <person name="Comerci D.J."/>
            <person name="Tolmasky M.E."/>
            <person name="Larimer F.W."/>
            <person name="Malfatti S.A."/>
            <person name="Vergez L.M."/>
            <person name="Aguero F."/>
            <person name="Land M.L."/>
            <person name="Ugalde R.A."/>
            <person name="Garcia E."/>
        </authorList>
    </citation>
    <scope>NUCLEOTIDE SEQUENCE [LARGE SCALE GENOMIC DNA]</scope>
    <source>
        <strain>2308</strain>
    </source>
</reference>
<evidence type="ECO:0000250" key="1"/>
<evidence type="ECO:0000255" key="2"/>
<evidence type="ECO:0000305" key="3"/>
<accession>Q2YK66</accession>